<name>MINE_SERP5</name>
<protein>
    <recommendedName>
        <fullName evidence="1">Cell division topological specificity factor</fullName>
    </recommendedName>
</protein>
<gene>
    <name evidence="1" type="primary">minE</name>
    <name type="ordered locus">Spro_2758</name>
</gene>
<sequence>MALLDFFLSRKKQTANIAKERLQIIVAERRRGDSEPPYLPDLKRDILAVICKYIQIDPEMLHVQFEQKGDDISVLELNVTLPESEEVTK</sequence>
<feature type="chain" id="PRO_1000059113" description="Cell division topological specificity factor">
    <location>
        <begin position="1"/>
        <end position="89"/>
    </location>
</feature>
<keyword id="KW-0131">Cell cycle</keyword>
<keyword id="KW-0132">Cell division</keyword>
<organism>
    <name type="scientific">Serratia proteamaculans (strain 568)</name>
    <dbReference type="NCBI Taxonomy" id="399741"/>
    <lineage>
        <taxon>Bacteria</taxon>
        <taxon>Pseudomonadati</taxon>
        <taxon>Pseudomonadota</taxon>
        <taxon>Gammaproteobacteria</taxon>
        <taxon>Enterobacterales</taxon>
        <taxon>Yersiniaceae</taxon>
        <taxon>Serratia</taxon>
    </lineage>
</organism>
<evidence type="ECO:0000255" key="1">
    <source>
        <dbReference type="HAMAP-Rule" id="MF_00262"/>
    </source>
</evidence>
<proteinExistence type="inferred from homology"/>
<dbReference type="EMBL" id="CP000826">
    <property type="protein sequence ID" value="ABV41859.1"/>
    <property type="molecule type" value="Genomic_DNA"/>
</dbReference>
<dbReference type="SMR" id="A8GFG9"/>
<dbReference type="STRING" id="399741.Spro_2758"/>
<dbReference type="KEGG" id="spe:Spro_2758"/>
<dbReference type="eggNOG" id="COG0851">
    <property type="taxonomic scope" value="Bacteria"/>
</dbReference>
<dbReference type="HOGENOM" id="CLU_137929_2_2_6"/>
<dbReference type="OrthoDB" id="9802655at2"/>
<dbReference type="GO" id="GO:0051301">
    <property type="term" value="P:cell division"/>
    <property type="evidence" value="ECO:0007669"/>
    <property type="project" value="UniProtKB-KW"/>
</dbReference>
<dbReference type="GO" id="GO:0032955">
    <property type="term" value="P:regulation of division septum assembly"/>
    <property type="evidence" value="ECO:0007669"/>
    <property type="project" value="InterPro"/>
</dbReference>
<dbReference type="FunFam" id="3.30.1070.10:FF:000001">
    <property type="entry name" value="Cell division topological specificity factor"/>
    <property type="match status" value="1"/>
</dbReference>
<dbReference type="Gene3D" id="3.30.1070.10">
    <property type="entry name" value="Cell division topological specificity factor MinE"/>
    <property type="match status" value="1"/>
</dbReference>
<dbReference type="HAMAP" id="MF_00262">
    <property type="entry name" value="MinE"/>
    <property type="match status" value="1"/>
</dbReference>
<dbReference type="InterPro" id="IPR005527">
    <property type="entry name" value="MinE"/>
</dbReference>
<dbReference type="InterPro" id="IPR036707">
    <property type="entry name" value="MinE_sf"/>
</dbReference>
<dbReference type="NCBIfam" id="TIGR01215">
    <property type="entry name" value="minE"/>
    <property type="match status" value="1"/>
</dbReference>
<dbReference type="NCBIfam" id="NF001422">
    <property type="entry name" value="PRK00296.1"/>
    <property type="match status" value="1"/>
</dbReference>
<dbReference type="Pfam" id="PF03776">
    <property type="entry name" value="MinE"/>
    <property type="match status" value="1"/>
</dbReference>
<dbReference type="SUPFAM" id="SSF55229">
    <property type="entry name" value="Cell division protein MinE topological specificity domain"/>
    <property type="match status" value="1"/>
</dbReference>
<comment type="function">
    <text evidence="1">Prevents the cell division inhibition by proteins MinC and MinD at internal division sites while permitting inhibition at polar sites. This ensures cell division at the proper site by restricting the formation of a division septum at the midpoint of the long axis of the cell.</text>
</comment>
<comment type="similarity">
    <text evidence="1">Belongs to the MinE family.</text>
</comment>
<reference key="1">
    <citation type="submission" date="2007-09" db="EMBL/GenBank/DDBJ databases">
        <title>Complete sequence of chromosome of Serratia proteamaculans 568.</title>
        <authorList>
            <consortium name="US DOE Joint Genome Institute"/>
            <person name="Copeland A."/>
            <person name="Lucas S."/>
            <person name="Lapidus A."/>
            <person name="Barry K."/>
            <person name="Glavina del Rio T."/>
            <person name="Dalin E."/>
            <person name="Tice H."/>
            <person name="Pitluck S."/>
            <person name="Chain P."/>
            <person name="Malfatti S."/>
            <person name="Shin M."/>
            <person name="Vergez L."/>
            <person name="Schmutz J."/>
            <person name="Larimer F."/>
            <person name="Land M."/>
            <person name="Hauser L."/>
            <person name="Kyrpides N."/>
            <person name="Kim E."/>
            <person name="Taghavi S."/>
            <person name="Newman L."/>
            <person name="Vangronsveld J."/>
            <person name="van der Lelie D."/>
            <person name="Richardson P."/>
        </authorList>
    </citation>
    <scope>NUCLEOTIDE SEQUENCE [LARGE SCALE GENOMIC DNA]</scope>
    <source>
        <strain>568</strain>
    </source>
</reference>
<accession>A8GFG9</accession>